<proteinExistence type="inferred from homology"/>
<dbReference type="EC" id="3.4.11.9"/>
<dbReference type="EMBL" id="DS995901">
    <property type="protein sequence ID" value="EEA24386.1"/>
    <property type="molecule type" value="Genomic_DNA"/>
</dbReference>
<dbReference type="RefSeq" id="XP_002147897.1">
    <property type="nucleotide sequence ID" value="XM_002147861.1"/>
</dbReference>
<dbReference type="SMR" id="B6QG01"/>
<dbReference type="STRING" id="441960.B6QG01"/>
<dbReference type="MEROPS" id="M24.009"/>
<dbReference type="VEuPathDB" id="FungiDB:PMAA_083920"/>
<dbReference type="HOGENOM" id="CLU_011781_2_2_1"/>
<dbReference type="OrthoDB" id="2068at28568"/>
<dbReference type="PhylomeDB" id="B6QG01"/>
<dbReference type="Proteomes" id="UP000001294">
    <property type="component" value="Unassembled WGS sequence"/>
</dbReference>
<dbReference type="GO" id="GO:0005737">
    <property type="term" value="C:cytoplasm"/>
    <property type="evidence" value="ECO:0007669"/>
    <property type="project" value="UniProtKB-ARBA"/>
</dbReference>
<dbReference type="GO" id="GO:0046872">
    <property type="term" value="F:metal ion binding"/>
    <property type="evidence" value="ECO:0007669"/>
    <property type="project" value="UniProtKB-KW"/>
</dbReference>
<dbReference type="GO" id="GO:0070006">
    <property type="term" value="F:metalloaminopeptidase activity"/>
    <property type="evidence" value="ECO:0007669"/>
    <property type="project" value="InterPro"/>
</dbReference>
<dbReference type="GO" id="GO:0006508">
    <property type="term" value="P:proteolysis"/>
    <property type="evidence" value="ECO:0007669"/>
    <property type="project" value="UniProtKB-KW"/>
</dbReference>
<dbReference type="CDD" id="cd01085">
    <property type="entry name" value="APP"/>
    <property type="match status" value="1"/>
</dbReference>
<dbReference type="FunFam" id="3.40.350.10:FF:000010">
    <property type="entry name" value="Probable Xaa-Pro aminopeptidase P"/>
    <property type="match status" value="1"/>
</dbReference>
<dbReference type="FunFam" id="3.90.230.10:FF:000007">
    <property type="entry name" value="Xaa-Pro aminopeptidase P"/>
    <property type="match status" value="1"/>
</dbReference>
<dbReference type="FunFam" id="3.40.350.10:FF:000003">
    <property type="entry name" value="Xaa-pro aminopeptidase P"/>
    <property type="match status" value="1"/>
</dbReference>
<dbReference type="Gene3D" id="3.90.230.10">
    <property type="entry name" value="Creatinase/methionine aminopeptidase superfamily"/>
    <property type="match status" value="1"/>
</dbReference>
<dbReference type="Gene3D" id="3.40.350.10">
    <property type="entry name" value="Creatinase/prolidase N-terminal domain"/>
    <property type="match status" value="2"/>
</dbReference>
<dbReference type="InterPro" id="IPR029149">
    <property type="entry name" value="Creatin/AminoP/Spt16_N"/>
</dbReference>
<dbReference type="InterPro" id="IPR036005">
    <property type="entry name" value="Creatinase/aminopeptidase-like"/>
</dbReference>
<dbReference type="InterPro" id="IPR000587">
    <property type="entry name" value="Creatinase_N"/>
</dbReference>
<dbReference type="InterPro" id="IPR000994">
    <property type="entry name" value="Pept_M24"/>
</dbReference>
<dbReference type="InterPro" id="IPR033740">
    <property type="entry name" value="Pept_M24B"/>
</dbReference>
<dbReference type="InterPro" id="IPR032416">
    <property type="entry name" value="Peptidase_M24_C"/>
</dbReference>
<dbReference type="InterPro" id="IPR050422">
    <property type="entry name" value="X-Pro_aminopeptidase_P"/>
</dbReference>
<dbReference type="PANTHER" id="PTHR43763">
    <property type="entry name" value="XAA-PRO AMINOPEPTIDASE 1"/>
    <property type="match status" value="1"/>
</dbReference>
<dbReference type="PANTHER" id="PTHR43763:SF6">
    <property type="entry name" value="XAA-PRO AMINOPEPTIDASE 1"/>
    <property type="match status" value="1"/>
</dbReference>
<dbReference type="Pfam" id="PF01321">
    <property type="entry name" value="Creatinase_N"/>
    <property type="match status" value="1"/>
</dbReference>
<dbReference type="Pfam" id="PF16189">
    <property type="entry name" value="Creatinase_N_2"/>
    <property type="match status" value="1"/>
</dbReference>
<dbReference type="Pfam" id="PF00557">
    <property type="entry name" value="Peptidase_M24"/>
    <property type="match status" value="1"/>
</dbReference>
<dbReference type="Pfam" id="PF16188">
    <property type="entry name" value="Peptidase_M24_C"/>
    <property type="match status" value="1"/>
</dbReference>
<dbReference type="SUPFAM" id="SSF55920">
    <property type="entry name" value="Creatinase/aminopeptidase"/>
    <property type="match status" value="1"/>
</dbReference>
<dbReference type="SUPFAM" id="SSF53092">
    <property type="entry name" value="Creatinase/prolidase N-terminal domain"/>
    <property type="match status" value="1"/>
</dbReference>
<accession>B6QG01</accession>
<gene>
    <name type="primary">ampp</name>
    <name type="ORF">PMAA_083920</name>
</gene>
<organism>
    <name type="scientific">Talaromyces marneffei (strain ATCC 18224 / CBS 334.59 / QM 7333)</name>
    <name type="common">Penicillium marneffei</name>
    <dbReference type="NCBI Taxonomy" id="441960"/>
    <lineage>
        <taxon>Eukaryota</taxon>
        <taxon>Fungi</taxon>
        <taxon>Dikarya</taxon>
        <taxon>Ascomycota</taxon>
        <taxon>Pezizomycotina</taxon>
        <taxon>Eurotiomycetes</taxon>
        <taxon>Eurotiomycetidae</taxon>
        <taxon>Eurotiales</taxon>
        <taxon>Trichocomaceae</taxon>
        <taxon>Talaromyces</taxon>
        <taxon>Talaromyces sect. Talaromyces</taxon>
    </lineage>
</organism>
<feature type="chain" id="PRO_0000411804" description="Probable Xaa-Pro aminopeptidase P">
    <location>
        <begin position="1"/>
        <end position="657"/>
    </location>
</feature>
<feature type="binding site" evidence="1">
    <location>
        <position position="453"/>
    </location>
    <ligand>
        <name>Mn(2+)</name>
        <dbReference type="ChEBI" id="CHEBI:29035"/>
        <label>2</label>
    </ligand>
</feature>
<feature type="binding site" evidence="1">
    <location>
        <position position="464"/>
    </location>
    <ligand>
        <name>Mn(2+)</name>
        <dbReference type="ChEBI" id="CHEBI:29035"/>
        <label>1</label>
    </ligand>
</feature>
<feature type="binding site" evidence="1">
    <location>
        <position position="464"/>
    </location>
    <ligand>
        <name>Mn(2+)</name>
        <dbReference type="ChEBI" id="CHEBI:29035"/>
        <label>2</label>
    </ligand>
</feature>
<feature type="binding site" evidence="1">
    <location>
        <position position="562"/>
    </location>
    <ligand>
        <name>Mn(2+)</name>
        <dbReference type="ChEBI" id="CHEBI:29035"/>
        <label>1</label>
    </ligand>
</feature>
<feature type="binding site" evidence="1">
    <location>
        <position position="576"/>
    </location>
    <ligand>
        <name>Mn(2+)</name>
        <dbReference type="ChEBI" id="CHEBI:29035"/>
        <label>1</label>
    </ligand>
</feature>
<feature type="binding site" evidence="1">
    <location>
        <position position="576"/>
    </location>
    <ligand>
        <name>Mn(2+)</name>
        <dbReference type="ChEBI" id="CHEBI:29035"/>
        <label>2</label>
    </ligand>
</feature>
<name>AMPP1_TALMQ</name>
<evidence type="ECO:0000250" key="1"/>
<evidence type="ECO:0000305" key="2"/>
<sequence length="657" mass="73149">MLFLCRASPLLQRTALSSPLRFFAPPKSSFNRTFANTAVRLSIEMETVDTSERLVQLRELMKRNNLDVYIVPSEDSHQSEYIAHCDARREFISGFTGSAGTAVISSTAAALSTDGRYFNQAAKQLDSNWTLLKRGLEGVPTWQEWTTEQAEGGKTVGVDPSVITAASARKLSETLEKSGSKLIGIEQNLVDQIWGDKRPARPNETVKIHPAEYAGKPFQEKIADLRKELKTKKRAGFIVSVLDEIAWLFNLRGNDIPYNPVFFSYAVITPETVDLYINDEKLSPEVKAHLGSDVVVKPYESIFADARALSVNAPLTENGSPMKYLTSNKASWALSLSFGGEKKLDEARSPISDAKAIKNEVELKGMRNCHIRDGAALSEYFAWLENELINKKSTLDEVDGADKLEQIRSKHDKFVGLSFDTISSTGPNAAVIHYKPEKGICSVIDPNAIYLCDSGGQYLDGTTDTTRTFHFGTPTEMEKKAFTLVLKGLIALDTAVFPKGTSGFALDALARQHLWRYGLDYLHGTGHGVGAYLNVHEGPIGVGTRIQYSEVSLSPGNVISDEPGYYEDGKFGIRIENIIMAREVETPYKFGEKSWLGFEHVTMTPIGQNLIETSLLSEEERQWVNNYHAEVWEKTSGYFKQDELTLNWLKKETKPLK</sequence>
<protein>
    <recommendedName>
        <fullName>Probable Xaa-Pro aminopeptidase P</fullName>
        <shortName>AMPP</shortName>
        <shortName>Aminopeptidase P</shortName>
        <ecNumber>3.4.11.9</ecNumber>
    </recommendedName>
    <alternativeName>
        <fullName>Aminoacylproline aminopeptidase</fullName>
    </alternativeName>
    <alternativeName>
        <fullName>Prolidase</fullName>
    </alternativeName>
</protein>
<comment type="function">
    <text evidence="1">Catalyzes the removal of a penultimate prolyl residue from the N-termini of peptides.</text>
</comment>
<comment type="catalytic activity">
    <reaction>
        <text>Release of any N-terminal amino acid, including proline, that is linked to proline, even from a dipeptide or tripeptide.</text>
        <dbReference type="EC" id="3.4.11.9"/>
    </reaction>
</comment>
<comment type="cofactor">
    <cofactor evidence="1">
        <name>Mn(2+)</name>
        <dbReference type="ChEBI" id="CHEBI:29035"/>
    </cofactor>
    <text evidence="1">Binds 2 manganese ions per subunit.</text>
</comment>
<comment type="similarity">
    <text evidence="2">Belongs to the peptidase M24B family.</text>
</comment>
<keyword id="KW-0031">Aminopeptidase</keyword>
<keyword id="KW-0378">Hydrolase</keyword>
<keyword id="KW-0464">Manganese</keyword>
<keyword id="KW-0479">Metal-binding</keyword>
<keyword id="KW-0482">Metalloprotease</keyword>
<keyword id="KW-0645">Protease</keyword>
<keyword id="KW-1185">Reference proteome</keyword>
<reference key="1">
    <citation type="journal article" date="2015" name="Genome Announc.">
        <title>Genome sequence of the AIDS-associated pathogen Penicillium marneffei (ATCC18224) and its near taxonomic relative Talaromyces stipitatus (ATCC10500).</title>
        <authorList>
            <person name="Nierman W.C."/>
            <person name="Fedorova-Abrams N.D."/>
            <person name="Andrianopoulos A."/>
        </authorList>
    </citation>
    <scope>NUCLEOTIDE SEQUENCE [LARGE SCALE GENOMIC DNA]</scope>
    <source>
        <strain>ATCC 18224 / CBS 334.59 / QM 7333</strain>
    </source>
</reference>